<feature type="chain" id="PRO_0000405583" description="Zinc finger CCCH domain-containing protein 14">
    <location>
        <begin position="1"/>
        <end position="740"/>
    </location>
</feature>
<feature type="zinc finger region" description="C3H1-type 1" evidence="2">
    <location>
        <begin position="499"/>
        <end position="522"/>
    </location>
</feature>
<feature type="zinc finger region" description="C3H1-type 2" evidence="2">
    <location>
        <begin position="523"/>
        <end position="543"/>
    </location>
</feature>
<feature type="zinc finger region" description="C3H1-type 3" evidence="2">
    <location>
        <begin position="668"/>
        <end position="691"/>
    </location>
</feature>
<feature type="zinc finger region" description="C3H1-type 4" evidence="2">
    <location>
        <begin position="674"/>
        <end position="691"/>
    </location>
</feature>
<feature type="zinc finger region" description="C3H1-type 5" evidence="2">
    <location>
        <begin position="693"/>
        <end position="709"/>
    </location>
</feature>
<feature type="region of interest" description="Disordered" evidence="3">
    <location>
        <begin position="82"/>
        <end position="240"/>
    </location>
</feature>
<feature type="region of interest" description="Disordered" evidence="3">
    <location>
        <begin position="254"/>
        <end position="314"/>
    </location>
</feature>
<feature type="region of interest" description="Disordered" evidence="3">
    <location>
        <begin position="390"/>
        <end position="426"/>
    </location>
</feature>
<feature type="region of interest" description="Disordered" evidence="3">
    <location>
        <begin position="444"/>
        <end position="469"/>
    </location>
</feature>
<feature type="region of interest" description="Disordered" evidence="3">
    <location>
        <begin position="623"/>
        <end position="661"/>
    </location>
</feature>
<feature type="compositionally biased region" description="Basic and acidic residues" evidence="3">
    <location>
        <begin position="87"/>
        <end position="158"/>
    </location>
</feature>
<feature type="compositionally biased region" description="Basic and acidic residues" evidence="3">
    <location>
        <begin position="176"/>
        <end position="185"/>
    </location>
</feature>
<feature type="compositionally biased region" description="Basic residues" evidence="3">
    <location>
        <begin position="186"/>
        <end position="200"/>
    </location>
</feature>
<feature type="compositionally biased region" description="Polar residues" evidence="3">
    <location>
        <begin position="204"/>
        <end position="214"/>
    </location>
</feature>
<feature type="compositionally biased region" description="Polar residues" evidence="3">
    <location>
        <begin position="393"/>
        <end position="409"/>
    </location>
</feature>
<feature type="compositionally biased region" description="Acidic residues" evidence="3">
    <location>
        <begin position="414"/>
        <end position="426"/>
    </location>
</feature>
<feature type="compositionally biased region" description="Basic and acidic residues" evidence="3">
    <location>
        <begin position="632"/>
        <end position="652"/>
    </location>
</feature>
<protein>
    <recommendedName>
        <fullName>Zinc finger CCCH domain-containing protein 14</fullName>
    </recommendedName>
    <alternativeName>
        <fullName>Suppressor of tau pathology protein 2</fullName>
    </alternativeName>
</protein>
<reference key="1">
    <citation type="journal article" date="1998" name="Science">
        <title>Genome sequence of the nematode C. elegans: a platform for investigating biology.</title>
        <authorList>
            <consortium name="The C. elegans sequencing consortium"/>
        </authorList>
    </citation>
    <scope>NUCLEOTIDE SEQUENCE [LARGE SCALE GENOMIC DNA]</scope>
    <source>
        <strain>Bristol N2</strain>
    </source>
</reference>
<reference key="2">
    <citation type="journal article" date="2009" name="Hum. Mol. Genet.">
        <title>SUT-2 potentiates tau-induced neurotoxicity in Caenorhabditis elegans.</title>
        <authorList>
            <person name="Guthrie C.R."/>
            <person name="Schellenberg G.D."/>
            <person name="Kraemer B.C."/>
        </authorList>
    </citation>
    <scope>SUBCELLULAR LOCATION</scope>
</reference>
<gene>
    <name type="primary">sut-2</name>
    <name type="ORF">Y61A9LA.8</name>
</gene>
<accession>Q95XU6</accession>
<proteinExistence type="inferred from homology"/>
<keyword id="KW-0963">Cytoplasm</keyword>
<keyword id="KW-0479">Metal-binding</keyword>
<keyword id="KW-0539">Nucleus</keyword>
<keyword id="KW-1185">Reference proteome</keyword>
<keyword id="KW-0677">Repeat</keyword>
<keyword id="KW-0862">Zinc</keyword>
<keyword id="KW-0863">Zinc-finger</keyword>
<name>ZC3HE_CAEEL</name>
<comment type="function">
    <text evidence="1">RNA-binding protein involved in the biogenesis of circular RNAs (circRNAs), which are produced by back-splicing circularization of pre-mRNAs.</text>
</comment>
<comment type="subcellular location">
    <subcellularLocation>
        <location evidence="4">Nucleus</location>
    </subcellularLocation>
    <subcellularLocation>
        <location evidence="4">Cytoplasm</location>
    </subcellularLocation>
    <text evidence="4">Mainly nuclear. Small amounts are found in the cytoplasm.</text>
</comment>
<comment type="similarity">
    <text evidence="5">Belongs to the ZC3H14 family.</text>
</comment>
<sequence>MNTQTGTGTSEVSKKLKAAIRAKLEELGVYVDDELPDYIMVMIANKKEKVQMKDDLNLFIGKSTAKFVDWLFDLFDRLQNASNKQGETSKKEEDKRKELEATAAAKEHEEKRRKEKEEHEKELQKEKEREKERQRERDREKRAEEEKRREEKRKEIQRSKRRRTRSRSNTYSDEEEHVRARGEKHDRHHHKDHRRGRSHERKIITSTIVRQASASPDKKLHSTVTVKRNIRPTGDQNIKGRGTMFLRAMNEASVSAGYGSSSKRSETHHEDDMSDVEALPSKPASTKSPKKSIRDRMSRISKTSEPPIEEDDAVVLEDFAQTGGGPQMILKLSGGREAIKKTRIQDRIVVDDGLRRGLLKRKIETASGASAGAATSEEPKSKHDRIIFDITPSRDSTPTDDSPTMQKWNGQIEIGDDSEESEDDEEAEIDAFVAEARGIARRESFRDEEDELPPTHQLSGGPYAYHHSTAAPTYIPTPLSVLSEQQNQMGGGAAKEDHHVKERCIFWPKCTKGDTCAFMHPTTNCKNFPNCTFGIRCLFIHPPCRFDRFCTKKHCPFTHHGTGGQQPGGAQLTSEFKNPLTSSRMLTVPSPFIAATAAAVEELPKPAARGALGSLAEKLAASIKKKPAPGAESEKKEEKSDENESKAEEPKAEVAPVQPKPLPDIAPLHSMVLCRYAGACRNPICHFKHPKECRFGANCRNPSCYFYHKPAGAAPTPVAAPIAAESAGAAKYKWTSATAN</sequence>
<evidence type="ECO:0000250" key="1">
    <source>
        <dbReference type="UniProtKB" id="Q6PJT7"/>
    </source>
</evidence>
<evidence type="ECO:0000255" key="2">
    <source>
        <dbReference type="PROSITE-ProRule" id="PRU00723"/>
    </source>
</evidence>
<evidence type="ECO:0000256" key="3">
    <source>
        <dbReference type="SAM" id="MobiDB-lite"/>
    </source>
</evidence>
<evidence type="ECO:0000269" key="4">
    <source>
    </source>
</evidence>
<evidence type="ECO:0000305" key="5"/>
<organism>
    <name type="scientific">Caenorhabditis elegans</name>
    <dbReference type="NCBI Taxonomy" id="6239"/>
    <lineage>
        <taxon>Eukaryota</taxon>
        <taxon>Metazoa</taxon>
        <taxon>Ecdysozoa</taxon>
        <taxon>Nematoda</taxon>
        <taxon>Chromadorea</taxon>
        <taxon>Rhabditida</taxon>
        <taxon>Rhabditina</taxon>
        <taxon>Rhabditomorpha</taxon>
        <taxon>Rhabditoidea</taxon>
        <taxon>Rhabditidae</taxon>
        <taxon>Peloderinae</taxon>
        <taxon>Caenorhabditis</taxon>
    </lineage>
</organism>
<dbReference type="EMBL" id="FO081464">
    <property type="protein sequence ID" value="CCD71770.1"/>
    <property type="molecule type" value="Genomic_DNA"/>
</dbReference>
<dbReference type="RefSeq" id="NP_504239.2">
    <property type="nucleotide sequence ID" value="NM_071838.5"/>
</dbReference>
<dbReference type="SMR" id="Q95XU6"/>
<dbReference type="BioGRID" id="43899">
    <property type="interactions" value="4"/>
</dbReference>
<dbReference type="FunCoup" id="Q95XU6">
    <property type="interactions" value="2528"/>
</dbReference>
<dbReference type="STRING" id="6239.Y61A9LA.8.1"/>
<dbReference type="PaxDb" id="6239-Y61A9LA.8"/>
<dbReference type="PeptideAtlas" id="Q95XU6"/>
<dbReference type="EnsemblMetazoa" id="Y61A9LA.8a.1">
    <property type="protein sequence ID" value="Y61A9LA.8a.1"/>
    <property type="gene ID" value="WBGene00022019"/>
</dbReference>
<dbReference type="GeneID" id="178847"/>
<dbReference type="KEGG" id="cel:CELE_Y61A9LA.8"/>
<dbReference type="UCSC" id="Y61A9LA.8">
    <property type="organism name" value="c. elegans"/>
</dbReference>
<dbReference type="AGR" id="WB:WBGene00022019"/>
<dbReference type="CTD" id="178847"/>
<dbReference type="WormBase" id="Y61A9LA.8a">
    <property type="protein sequence ID" value="CE31123"/>
    <property type="gene ID" value="WBGene00022019"/>
    <property type="gene designation" value="sut-2"/>
</dbReference>
<dbReference type="eggNOG" id="KOG3702">
    <property type="taxonomic scope" value="Eukaryota"/>
</dbReference>
<dbReference type="GeneTree" id="ENSGT00440000038430"/>
<dbReference type="HOGENOM" id="CLU_022605_0_0_1"/>
<dbReference type="InParanoid" id="Q95XU6"/>
<dbReference type="OMA" id="FCEYYHP"/>
<dbReference type="OrthoDB" id="5589010at2759"/>
<dbReference type="PhylomeDB" id="Q95XU6"/>
<dbReference type="PRO" id="PR:Q95XU6"/>
<dbReference type="Proteomes" id="UP000001940">
    <property type="component" value="Chromosome V"/>
</dbReference>
<dbReference type="Bgee" id="WBGene00022019">
    <property type="expression patterns" value="Expressed in embryo and 4 other cell types or tissues"/>
</dbReference>
<dbReference type="ExpressionAtlas" id="Q95XU6">
    <property type="expression patterns" value="baseline and differential"/>
</dbReference>
<dbReference type="GO" id="GO:0005737">
    <property type="term" value="C:cytoplasm"/>
    <property type="evidence" value="ECO:0000314"/>
    <property type="project" value="UniProtKB"/>
</dbReference>
<dbReference type="GO" id="GO:0016607">
    <property type="term" value="C:nuclear speck"/>
    <property type="evidence" value="ECO:0000250"/>
    <property type="project" value="UniProtKB"/>
</dbReference>
<dbReference type="GO" id="GO:0005634">
    <property type="term" value="C:nucleus"/>
    <property type="evidence" value="ECO:0000314"/>
    <property type="project" value="WormBase"/>
</dbReference>
<dbReference type="GO" id="GO:0048471">
    <property type="term" value="C:perinuclear region of cytoplasm"/>
    <property type="evidence" value="ECO:0000314"/>
    <property type="project" value="WormBase"/>
</dbReference>
<dbReference type="GO" id="GO:0008143">
    <property type="term" value="F:poly(A) binding"/>
    <property type="evidence" value="ECO:0000318"/>
    <property type="project" value="GO_Central"/>
</dbReference>
<dbReference type="GO" id="GO:0008270">
    <property type="term" value="F:zinc ion binding"/>
    <property type="evidence" value="ECO:0007669"/>
    <property type="project" value="UniProtKB-KW"/>
</dbReference>
<dbReference type="GO" id="GO:0043488">
    <property type="term" value="P:regulation of mRNA stability"/>
    <property type="evidence" value="ECO:0000318"/>
    <property type="project" value="GO_Central"/>
</dbReference>
<dbReference type="FunFam" id="4.10.1000.40:FF:000006">
    <property type="entry name" value="Zinc finger CCCH domain-containing protein 14"/>
    <property type="match status" value="1"/>
</dbReference>
<dbReference type="Gene3D" id="4.10.1000.30">
    <property type="match status" value="1"/>
</dbReference>
<dbReference type="Gene3D" id="4.10.1000.40">
    <property type="match status" value="1"/>
</dbReference>
<dbReference type="Gene3D" id="1.10.340.40">
    <property type="entry name" value="Nuclear abundant poly(A) RNA-bind protein 2, N-terminal domain"/>
    <property type="match status" value="1"/>
</dbReference>
<dbReference type="InterPro" id="IPR040366">
    <property type="entry name" value="Nab2/ZC3H14"/>
</dbReference>
<dbReference type="InterPro" id="IPR043094">
    <property type="entry name" value="Nab2/ZC3H14_N_sf"/>
</dbReference>
<dbReference type="InterPro" id="IPR000571">
    <property type="entry name" value="Znf_CCCH"/>
</dbReference>
<dbReference type="PANTHER" id="PTHR14738">
    <property type="entry name" value="ZINC FINGER CCCH DOMAIN-CONTAINING PROTEIN 14"/>
    <property type="match status" value="1"/>
</dbReference>
<dbReference type="PANTHER" id="PTHR14738:SF29">
    <property type="entry name" value="ZINC FINGER CCCH DOMAIN-CONTAINING PROTEIN 14"/>
    <property type="match status" value="1"/>
</dbReference>
<dbReference type="Pfam" id="PF14608">
    <property type="entry name" value="zf-CCCH_2"/>
    <property type="match status" value="4"/>
</dbReference>
<dbReference type="SMART" id="SM00356">
    <property type="entry name" value="ZnF_C3H1"/>
    <property type="match status" value="3"/>
</dbReference>
<dbReference type="PROSITE" id="PS50103">
    <property type="entry name" value="ZF_C3H1"/>
    <property type="match status" value="1"/>
</dbReference>